<gene>
    <name type="ORF">SPAC19G12.04</name>
</gene>
<accession>O13843</accession>
<name>ALLA_SCHPO</name>
<sequence>MEAKKIYAQALTDEAFAPFGSVVQQKDDVKMVSANGGTAKKYLKVSESIQNYEKSSSASTRKGVWNFFSTHPSVHPANDEHAAFQISVLERHPFTTQTFIPMCRSSDEQAYLIAVAPNAPDGMPDWNQTQAFVAKGAQGVTYSAGVWHAPMVTIGKETMLAAFNYENGVAEDDCQVQSTESPIEVFIKIST</sequence>
<organism>
    <name type="scientific">Schizosaccharomyces pombe (strain 972 / ATCC 24843)</name>
    <name type="common">Fission yeast</name>
    <dbReference type="NCBI Taxonomy" id="284812"/>
    <lineage>
        <taxon>Eukaryota</taxon>
        <taxon>Fungi</taxon>
        <taxon>Dikarya</taxon>
        <taxon>Ascomycota</taxon>
        <taxon>Taphrinomycotina</taxon>
        <taxon>Schizosaccharomycetes</taxon>
        <taxon>Schizosaccharomycetales</taxon>
        <taxon>Schizosaccharomycetaceae</taxon>
        <taxon>Schizosaccharomyces</taxon>
    </lineage>
</organism>
<proteinExistence type="inferred from homology"/>
<evidence type="ECO:0000250" key="1"/>
<evidence type="ECO:0000305" key="2"/>
<feature type="chain" id="PRO_0000120561" description="Ureidoglycolate lyase">
    <location>
        <begin position="1"/>
        <end position="191"/>
    </location>
</feature>
<reference key="1">
    <citation type="journal article" date="2002" name="Nature">
        <title>The genome sequence of Schizosaccharomyces pombe.</title>
        <authorList>
            <person name="Wood V."/>
            <person name="Gwilliam R."/>
            <person name="Rajandream M.A."/>
            <person name="Lyne M.H."/>
            <person name="Lyne R."/>
            <person name="Stewart A."/>
            <person name="Sgouros J.G."/>
            <person name="Peat N."/>
            <person name="Hayles J."/>
            <person name="Baker S.G."/>
            <person name="Basham D."/>
            <person name="Bowman S."/>
            <person name="Brooks K."/>
            <person name="Brown D."/>
            <person name="Brown S."/>
            <person name="Chillingworth T."/>
            <person name="Churcher C.M."/>
            <person name="Collins M."/>
            <person name="Connor R."/>
            <person name="Cronin A."/>
            <person name="Davis P."/>
            <person name="Feltwell T."/>
            <person name="Fraser A."/>
            <person name="Gentles S."/>
            <person name="Goble A."/>
            <person name="Hamlin N."/>
            <person name="Harris D.E."/>
            <person name="Hidalgo J."/>
            <person name="Hodgson G."/>
            <person name="Holroyd S."/>
            <person name="Hornsby T."/>
            <person name="Howarth S."/>
            <person name="Huckle E.J."/>
            <person name="Hunt S."/>
            <person name="Jagels K."/>
            <person name="James K.D."/>
            <person name="Jones L."/>
            <person name="Jones M."/>
            <person name="Leather S."/>
            <person name="McDonald S."/>
            <person name="McLean J."/>
            <person name="Mooney P."/>
            <person name="Moule S."/>
            <person name="Mungall K.L."/>
            <person name="Murphy L.D."/>
            <person name="Niblett D."/>
            <person name="Odell C."/>
            <person name="Oliver K."/>
            <person name="O'Neil S."/>
            <person name="Pearson D."/>
            <person name="Quail M.A."/>
            <person name="Rabbinowitsch E."/>
            <person name="Rutherford K.M."/>
            <person name="Rutter S."/>
            <person name="Saunders D."/>
            <person name="Seeger K."/>
            <person name="Sharp S."/>
            <person name="Skelton J."/>
            <person name="Simmonds M.N."/>
            <person name="Squares R."/>
            <person name="Squares S."/>
            <person name="Stevens K."/>
            <person name="Taylor K."/>
            <person name="Taylor R.G."/>
            <person name="Tivey A."/>
            <person name="Walsh S.V."/>
            <person name="Warren T."/>
            <person name="Whitehead S."/>
            <person name="Woodward J.R."/>
            <person name="Volckaert G."/>
            <person name="Aert R."/>
            <person name="Robben J."/>
            <person name="Grymonprez B."/>
            <person name="Weltjens I."/>
            <person name="Vanstreels E."/>
            <person name="Rieger M."/>
            <person name="Schaefer M."/>
            <person name="Mueller-Auer S."/>
            <person name="Gabel C."/>
            <person name="Fuchs M."/>
            <person name="Duesterhoeft A."/>
            <person name="Fritzc C."/>
            <person name="Holzer E."/>
            <person name="Moestl D."/>
            <person name="Hilbert H."/>
            <person name="Borzym K."/>
            <person name="Langer I."/>
            <person name="Beck A."/>
            <person name="Lehrach H."/>
            <person name="Reinhardt R."/>
            <person name="Pohl T.M."/>
            <person name="Eger P."/>
            <person name="Zimmermann W."/>
            <person name="Wedler H."/>
            <person name="Wambutt R."/>
            <person name="Purnelle B."/>
            <person name="Goffeau A."/>
            <person name="Cadieu E."/>
            <person name="Dreano S."/>
            <person name="Gloux S."/>
            <person name="Lelaure V."/>
            <person name="Mottier S."/>
            <person name="Galibert F."/>
            <person name="Aves S.J."/>
            <person name="Xiang Z."/>
            <person name="Hunt C."/>
            <person name="Moore K."/>
            <person name="Hurst S.M."/>
            <person name="Lucas M."/>
            <person name="Rochet M."/>
            <person name="Gaillardin C."/>
            <person name="Tallada V.A."/>
            <person name="Garzon A."/>
            <person name="Thode G."/>
            <person name="Daga R.R."/>
            <person name="Cruzado L."/>
            <person name="Jimenez J."/>
            <person name="Sanchez M."/>
            <person name="del Rey F."/>
            <person name="Benito J."/>
            <person name="Dominguez A."/>
            <person name="Revuelta J.L."/>
            <person name="Moreno S."/>
            <person name="Armstrong J."/>
            <person name="Forsburg S.L."/>
            <person name="Cerutti L."/>
            <person name="Lowe T."/>
            <person name="McCombie W.R."/>
            <person name="Paulsen I."/>
            <person name="Potashkin J."/>
            <person name="Shpakovski G.V."/>
            <person name="Ussery D."/>
            <person name="Barrell B.G."/>
            <person name="Nurse P."/>
        </authorList>
    </citation>
    <scope>NUCLEOTIDE SEQUENCE [LARGE SCALE GENOMIC DNA]</scope>
    <source>
        <strain>972 / ATCC 24843</strain>
    </source>
</reference>
<dbReference type="EC" id="4.3.2.3"/>
<dbReference type="EMBL" id="CU329670">
    <property type="protein sequence ID" value="CAB10115.1"/>
    <property type="molecule type" value="Genomic_DNA"/>
</dbReference>
<dbReference type="PIR" id="T37991">
    <property type="entry name" value="T37991"/>
</dbReference>
<dbReference type="SMR" id="O13843"/>
<dbReference type="BioGRID" id="278931">
    <property type="interactions" value="3"/>
</dbReference>
<dbReference type="FunCoup" id="O13843">
    <property type="interactions" value="57"/>
</dbReference>
<dbReference type="STRING" id="284812.O13843"/>
<dbReference type="iPTMnet" id="O13843"/>
<dbReference type="PaxDb" id="4896-SPAC19G12.04.1"/>
<dbReference type="EnsemblFungi" id="SPAC19G12.04.1">
    <property type="protein sequence ID" value="SPAC19G12.04.1:pep"/>
    <property type="gene ID" value="SPAC19G12.04"/>
</dbReference>
<dbReference type="KEGG" id="spo:2542470"/>
<dbReference type="PomBase" id="SPAC19G12.04"/>
<dbReference type="VEuPathDB" id="FungiDB:SPAC19G12.04"/>
<dbReference type="eggNOG" id="ENOG502S1JQ">
    <property type="taxonomic scope" value="Eukaryota"/>
</dbReference>
<dbReference type="HOGENOM" id="CLU_070848_0_1_1"/>
<dbReference type="InParanoid" id="O13843"/>
<dbReference type="OMA" id="ECYFEPG"/>
<dbReference type="PhylomeDB" id="O13843"/>
<dbReference type="UniPathway" id="UPA00395"/>
<dbReference type="PRO" id="PR:O13843"/>
<dbReference type="Proteomes" id="UP000002485">
    <property type="component" value="Chromosome I"/>
</dbReference>
<dbReference type="GO" id="GO:0005829">
    <property type="term" value="C:cytosol"/>
    <property type="evidence" value="ECO:0007005"/>
    <property type="project" value="PomBase"/>
</dbReference>
<dbReference type="GO" id="GO:0005634">
    <property type="term" value="C:nucleus"/>
    <property type="evidence" value="ECO:0007005"/>
    <property type="project" value="PomBase"/>
</dbReference>
<dbReference type="GO" id="GO:0004848">
    <property type="term" value="F:ureidoglycolate hydrolase activity"/>
    <property type="evidence" value="ECO:0007669"/>
    <property type="project" value="InterPro"/>
</dbReference>
<dbReference type="GO" id="GO:0050385">
    <property type="term" value="F:ureidoglycolate lyase activity"/>
    <property type="evidence" value="ECO:0000318"/>
    <property type="project" value="GO_Central"/>
</dbReference>
<dbReference type="GO" id="GO:0000256">
    <property type="term" value="P:allantoin catabolic process"/>
    <property type="evidence" value="ECO:0000266"/>
    <property type="project" value="PomBase"/>
</dbReference>
<dbReference type="GO" id="GO:0006145">
    <property type="term" value="P:purine nucleobase catabolic process"/>
    <property type="evidence" value="ECO:0000250"/>
    <property type="project" value="PomBase"/>
</dbReference>
<dbReference type="CDD" id="cd20298">
    <property type="entry name" value="cupin_UAH"/>
    <property type="match status" value="1"/>
</dbReference>
<dbReference type="FunFam" id="2.60.120.480:FF:000003">
    <property type="entry name" value="Ureidoglycolate hydrolase"/>
    <property type="match status" value="1"/>
</dbReference>
<dbReference type="Gene3D" id="2.60.120.480">
    <property type="entry name" value="Ureidoglycolate hydrolase"/>
    <property type="match status" value="1"/>
</dbReference>
<dbReference type="InterPro" id="IPR011051">
    <property type="entry name" value="RmlC_Cupin_sf"/>
</dbReference>
<dbReference type="InterPro" id="IPR047233">
    <property type="entry name" value="UAH_cupin"/>
</dbReference>
<dbReference type="InterPro" id="IPR007247">
    <property type="entry name" value="Ureidogly_lyase"/>
</dbReference>
<dbReference type="InterPro" id="IPR024060">
    <property type="entry name" value="Ureidoglycolate_lyase_dom_sf"/>
</dbReference>
<dbReference type="PANTHER" id="PTHR21221">
    <property type="entry name" value="UREIDOGLYCOLATE HYDROLASE"/>
    <property type="match status" value="1"/>
</dbReference>
<dbReference type="PANTHER" id="PTHR21221:SF1">
    <property type="entry name" value="UREIDOGLYCOLATE LYASE"/>
    <property type="match status" value="1"/>
</dbReference>
<dbReference type="Pfam" id="PF04115">
    <property type="entry name" value="Ureidogly_lyase"/>
    <property type="match status" value="1"/>
</dbReference>
<dbReference type="SUPFAM" id="SSF51182">
    <property type="entry name" value="RmlC-like cupins"/>
    <property type="match status" value="1"/>
</dbReference>
<comment type="function">
    <text evidence="1">Catalyzes the catabolism of the allantoin degradation intermediate (S)-ureidoglycolate, generating urea and glyoxylate. Involved in the utilization of allantoin as secondary nitrogen source when primary sources are limiting (By similarity).</text>
</comment>
<comment type="catalytic activity">
    <reaction>
        <text>(S)-ureidoglycolate = urea + glyoxylate</text>
        <dbReference type="Rhea" id="RHEA:11304"/>
        <dbReference type="ChEBI" id="CHEBI:16199"/>
        <dbReference type="ChEBI" id="CHEBI:36655"/>
        <dbReference type="ChEBI" id="CHEBI:57296"/>
        <dbReference type="EC" id="4.3.2.3"/>
    </reaction>
</comment>
<comment type="pathway">
    <text>Nitrogen metabolism; (S)-allantoin degradation.</text>
</comment>
<comment type="subunit">
    <text evidence="1">Homodimer.</text>
</comment>
<comment type="similarity">
    <text evidence="2">Belongs to the ureidoglycolate lyase family.</text>
</comment>
<protein>
    <recommendedName>
        <fullName>Ureidoglycolate lyase</fullName>
        <ecNumber>4.3.2.3</ecNumber>
    </recommendedName>
    <alternativeName>
        <fullName>Ureidoglycolatase</fullName>
    </alternativeName>
</protein>
<keyword id="KW-0456">Lyase</keyword>
<keyword id="KW-0659">Purine metabolism</keyword>
<keyword id="KW-1185">Reference proteome</keyword>